<name>DF277_ARATH</name>
<keyword id="KW-0929">Antimicrobial</keyword>
<keyword id="KW-1015">Disulfide bond</keyword>
<keyword id="KW-0295">Fungicide</keyword>
<keyword id="KW-0611">Plant defense</keyword>
<keyword id="KW-1185">Reference proteome</keyword>
<keyword id="KW-0964">Secreted</keyword>
<keyword id="KW-0732">Signal</keyword>
<proteinExistence type="inferred from homology"/>
<feature type="signal peptide" evidence="2">
    <location>
        <begin position="1"/>
        <end position="24"/>
    </location>
</feature>
<feature type="chain" id="PRO_0000379738" description="Putative defensin-like protein 277">
    <location>
        <begin position="25"/>
        <end position="73"/>
    </location>
</feature>
<feature type="disulfide bond" evidence="1">
    <location>
        <begin position="27"/>
        <end position="64"/>
    </location>
</feature>
<feature type="disulfide bond" evidence="1">
    <location>
        <begin position="33"/>
        <end position="52"/>
    </location>
</feature>
<feature type="disulfide bond" evidence="1">
    <location>
        <begin position="39"/>
        <end position="62"/>
    </location>
</feature>
<feature type="disulfide bond" evidence="1">
    <location>
        <begin position="43"/>
        <end position="63"/>
    </location>
</feature>
<gene>
    <name type="ordered locus">At5g37473</name>
    <name type="ORF">MPA22</name>
    <name type="ORF">T25O11</name>
</gene>
<accession>Q2V329</accession>
<comment type="subcellular location">
    <subcellularLocation>
        <location evidence="1">Secreted</location>
    </subcellularLocation>
</comment>
<comment type="similarity">
    <text evidence="3">Belongs to the DEFL family.</text>
</comment>
<protein>
    <recommendedName>
        <fullName>Putative defensin-like protein 277</fullName>
    </recommendedName>
</protein>
<organism>
    <name type="scientific">Arabidopsis thaliana</name>
    <name type="common">Mouse-ear cress</name>
    <dbReference type="NCBI Taxonomy" id="3702"/>
    <lineage>
        <taxon>Eukaryota</taxon>
        <taxon>Viridiplantae</taxon>
        <taxon>Streptophyta</taxon>
        <taxon>Embryophyta</taxon>
        <taxon>Tracheophyta</taxon>
        <taxon>Spermatophyta</taxon>
        <taxon>Magnoliopsida</taxon>
        <taxon>eudicotyledons</taxon>
        <taxon>Gunneridae</taxon>
        <taxon>Pentapetalae</taxon>
        <taxon>rosids</taxon>
        <taxon>malvids</taxon>
        <taxon>Brassicales</taxon>
        <taxon>Brassicaceae</taxon>
        <taxon>Camelineae</taxon>
        <taxon>Arabidopsis</taxon>
    </lineage>
</organism>
<dbReference type="EMBL" id="AB025630">
    <property type="status" value="NOT_ANNOTATED_CDS"/>
    <property type="molecule type" value="Genomic_DNA"/>
</dbReference>
<dbReference type="EMBL" id="AP000607">
    <property type="status" value="NOT_ANNOTATED_CDS"/>
    <property type="molecule type" value="Genomic_DNA"/>
</dbReference>
<dbReference type="EMBL" id="CP002688">
    <property type="protein sequence ID" value="AED94193.1"/>
    <property type="molecule type" value="Genomic_DNA"/>
</dbReference>
<dbReference type="RefSeq" id="NP_001031976.1">
    <property type="nucleotide sequence ID" value="NM_001036899.1"/>
</dbReference>
<dbReference type="SMR" id="Q2V329"/>
<dbReference type="PaxDb" id="3702-AT5G37473.1"/>
<dbReference type="EnsemblPlants" id="AT5G37473.1">
    <property type="protein sequence ID" value="AT5G37473.1"/>
    <property type="gene ID" value="AT5G37473"/>
</dbReference>
<dbReference type="GeneID" id="3771345"/>
<dbReference type="Gramene" id="AT5G37473.1">
    <property type="protein sequence ID" value="AT5G37473.1"/>
    <property type="gene ID" value="AT5G37473"/>
</dbReference>
<dbReference type="KEGG" id="ath:AT5G37473"/>
<dbReference type="Araport" id="AT5G37473"/>
<dbReference type="TAIR" id="AT5G37473"/>
<dbReference type="HOGENOM" id="CLU_198543_0_0_1"/>
<dbReference type="InParanoid" id="Q2V329"/>
<dbReference type="OMA" id="DCINACI"/>
<dbReference type="OrthoDB" id="1021110at2759"/>
<dbReference type="PhylomeDB" id="Q2V329"/>
<dbReference type="PRO" id="PR:Q2V329"/>
<dbReference type="Proteomes" id="UP000006548">
    <property type="component" value="Chromosome 5"/>
</dbReference>
<dbReference type="ExpressionAtlas" id="Q2V329">
    <property type="expression patterns" value="baseline and differential"/>
</dbReference>
<dbReference type="GO" id="GO:0005576">
    <property type="term" value="C:extracellular region"/>
    <property type="evidence" value="ECO:0007669"/>
    <property type="project" value="UniProtKB-SubCell"/>
</dbReference>
<dbReference type="GO" id="GO:0050832">
    <property type="term" value="P:defense response to fungus"/>
    <property type="evidence" value="ECO:0007669"/>
    <property type="project" value="UniProtKB-KW"/>
</dbReference>
<dbReference type="GO" id="GO:0031640">
    <property type="term" value="P:killing of cells of another organism"/>
    <property type="evidence" value="ECO:0007669"/>
    <property type="project" value="UniProtKB-KW"/>
</dbReference>
<dbReference type="InterPro" id="IPR010851">
    <property type="entry name" value="DEFL"/>
</dbReference>
<dbReference type="Pfam" id="PF25052">
    <property type="entry name" value="AtDEF-like"/>
    <property type="match status" value="1"/>
</dbReference>
<evidence type="ECO:0000250" key="1"/>
<evidence type="ECO:0000255" key="2"/>
<evidence type="ECO:0000305" key="3"/>
<reference key="1">
    <citation type="submission" date="1999-10" db="EMBL/GenBank/DDBJ databases">
        <title>Structural analysis of Arabidopsis thaliana chromosome 5. XI.</title>
        <authorList>
            <person name="Kaneko T."/>
            <person name="Katoh T."/>
            <person name="Asamizu E."/>
            <person name="Sato S."/>
            <person name="Nakamura Y."/>
            <person name="Kotani H."/>
            <person name="Tabata S."/>
        </authorList>
    </citation>
    <scope>NUCLEOTIDE SEQUENCE [LARGE SCALE GENOMIC DNA]</scope>
    <source>
        <strain>cv. Columbia</strain>
    </source>
</reference>
<reference key="2">
    <citation type="journal article" date="2017" name="Plant J.">
        <title>Araport11: a complete reannotation of the Arabidopsis thaliana reference genome.</title>
        <authorList>
            <person name="Cheng C.Y."/>
            <person name="Krishnakumar V."/>
            <person name="Chan A.P."/>
            <person name="Thibaud-Nissen F."/>
            <person name="Schobel S."/>
            <person name="Town C.D."/>
        </authorList>
    </citation>
    <scope>GENOME REANNOTATION</scope>
    <source>
        <strain>cv. Columbia</strain>
    </source>
</reference>
<reference key="3">
    <citation type="journal article" date="2005" name="Plant Physiol.">
        <title>Genome organization of more than 300 defensin-like genes in Arabidopsis.</title>
        <authorList>
            <person name="Silverstein K.A.T."/>
            <person name="Graham M.A."/>
            <person name="Paape T.D."/>
            <person name="VandenBosch K.A."/>
        </authorList>
    </citation>
    <scope>GENE FAMILY</scope>
</reference>
<sequence length="73" mass="7890">MSAQKIYLASLLLFICLVFPQSTAIVCNFEGHCVTSDDCINVCKSGEDPFLCVRSGPHKGMCCCLKTNGSVLE</sequence>